<comment type="catalytic activity">
    <reaction evidence="1">
        <text>tRNA(His) + L-histidine + ATP = L-histidyl-tRNA(His) + AMP + diphosphate + H(+)</text>
        <dbReference type="Rhea" id="RHEA:17313"/>
        <dbReference type="Rhea" id="RHEA-COMP:9665"/>
        <dbReference type="Rhea" id="RHEA-COMP:9689"/>
        <dbReference type="ChEBI" id="CHEBI:15378"/>
        <dbReference type="ChEBI" id="CHEBI:30616"/>
        <dbReference type="ChEBI" id="CHEBI:33019"/>
        <dbReference type="ChEBI" id="CHEBI:57595"/>
        <dbReference type="ChEBI" id="CHEBI:78442"/>
        <dbReference type="ChEBI" id="CHEBI:78527"/>
        <dbReference type="ChEBI" id="CHEBI:456215"/>
        <dbReference type="EC" id="6.1.1.21"/>
    </reaction>
</comment>
<comment type="subcellular location">
    <subcellularLocation>
        <location evidence="1">Cytoplasm</location>
    </subcellularLocation>
</comment>
<comment type="similarity">
    <text evidence="1">Belongs to the class-II aminoacyl-tRNA synthetase family.</text>
</comment>
<name>SYH_METM6</name>
<protein>
    <recommendedName>
        <fullName evidence="1">Histidine--tRNA ligase</fullName>
        <ecNumber evidence="1">6.1.1.21</ecNumber>
    </recommendedName>
    <alternativeName>
        <fullName evidence="1">Histidyl-tRNA synthetase</fullName>
        <shortName evidence="1">HisRS</shortName>
    </alternativeName>
</protein>
<keyword id="KW-0030">Aminoacyl-tRNA synthetase</keyword>
<keyword id="KW-0067">ATP-binding</keyword>
<keyword id="KW-0963">Cytoplasm</keyword>
<keyword id="KW-0436">Ligase</keyword>
<keyword id="KW-0547">Nucleotide-binding</keyword>
<keyword id="KW-0648">Protein biosynthesis</keyword>
<reference key="1">
    <citation type="submission" date="2007-10" db="EMBL/GenBank/DDBJ databases">
        <title>Complete sequence of Methanococcus maripaludis C6.</title>
        <authorList>
            <consortium name="US DOE Joint Genome Institute"/>
            <person name="Copeland A."/>
            <person name="Lucas S."/>
            <person name="Lapidus A."/>
            <person name="Barry K."/>
            <person name="Glavina del Rio T."/>
            <person name="Dalin E."/>
            <person name="Tice H."/>
            <person name="Pitluck S."/>
            <person name="Clum A."/>
            <person name="Schmutz J."/>
            <person name="Larimer F."/>
            <person name="Land M."/>
            <person name="Hauser L."/>
            <person name="Kyrpides N."/>
            <person name="Mikhailova N."/>
            <person name="Sieprawska-Lupa M."/>
            <person name="Whitman W.B."/>
            <person name="Richardson P."/>
        </authorList>
    </citation>
    <scope>NUCLEOTIDE SEQUENCE [LARGE SCALE GENOMIC DNA]</scope>
    <source>
        <strain>C6 / ATCC BAA-1332</strain>
    </source>
</reference>
<feature type="chain" id="PRO_1000095570" description="Histidine--tRNA ligase">
    <location>
        <begin position="1"/>
        <end position="418"/>
    </location>
</feature>
<organism>
    <name type="scientific">Methanococcus maripaludis (strain C6 / ATCC BAA-1332)</name>
    <dbReference type="NCBI Taxonomy" id="444158"/>
    <lineage>
        <taxon>Archaea</taxon>
        <taxon>Methanobacteriati</taxon>
        <taxon>Methanobacteriota</taxon>
        <taxon>Methanomada group</taxon>
        <taxon>Methanococci</taxon>
        <taxon>Methanococcales</taxon>
        <taxon>Methanococcaceae</taxon>
        <taxon>Methanococcus</taxon>
    </lineage>
</organism>
<sequence length="418" mass="47920">MLMFQKPKGTRDFLPEEMKKRKNIEKKLRKVFDSYNFSEINTPTFESFELLSKKTGEEIRKQLFVFKDHGDREMGLRPELTSSVARFYINEFKNTPKPVKLYYFTNCFRYENPQAGRYREFWQMGSELIGSKKPIADAEVINLAIEGLKEINMDFEINIGHLGVLKGVFEKYDLSDDEGNEIRRLIDKEDMDGLKTALSRIESEKNIEISEKVFEVLELKGGREVISKLKEKLSEFESSVTALENLDSILEFVPHEYIINFGIARGLDYYTGMVFEIYGKREGARQVCGGGRYDNLIELFEGEPSPAVGFAYGFDRIMLNIDDFEVEEESIFVVPVKSSDMLLNECLKIAKTLRDAGKAVELDLMGRKLNKALNYANTKGIKKVLIVGENDILEGKVALKNMETGEQSLIELKDILTI</sequence>
<dbReference type="EC" id="6.1.1.21" evidence="1"/>
<dbReference type="EMBL" id="CP000867">
    <property type="protein sequence ID" value="ABX01870.1"/>
    <property type="molecule type" value="Genomic_DNA"/>
</dbReference>
<dbReference type="SMR" id="A9A947"/>
<dbReference type="STRING" id="444158.MmarC6_1055"/>
<dbReference type="KEGG" id="mmx:MmarC6_1055"/>
<dbReference type="eggNOG" id="arCOG00404">
    <property type="taxonomic scope" value="Archaea"/>
</dbReference>
<dbReference type="HOGENOM" id="CLU_025113_3_1_2"/>
<dbReference type="OrthoDB" id="8659at2157"/>
<dbReference type="PhylomeDB" id="A9A947"/>
<dbReference type="GO" id="GO:0005737">
    <property type="term" value="C:cytoplasm"/>
    <property type="evidence" value="ECO:0007669"/>
    <property type="project" value="UniProtKB-SubCell"/>
</dbReference>
<dbReference type="GO" id="GO:0005524">
    <property type="term" value="F:ATP binding"/>
    <property type="evidence" value="ECO:0007669"/>
    <property type="project" value="UniProtKB-UniRule"/>
</dbReference>
<dbReference type="GO" id="GO:0004821">
    <property type="term" value="F:histidine-tRNA ligase activity"/>
    <property type="evidence" value="ECO:0007669"/>
    <property type="project" value="UniProtKB-UniRule"/>
</dbReference>
<dbReference type="GO" id="GO:0006427">
    <property type="term" value="P:histidyl-tRNA aminoacylation"/>
    <property type="evidence" value="ECO:0007669"/>
    <property type="project" value="UniProtKB-UniRule"/>
</dbReference>
<dbReference type="GO" id="GO:0000105">
    <property type="term" value="P:L-histidine biosynthetic process"/>
    <property type="evidence" value="ECO:0007669"/>
    <property type="project" value="InterPro"/>
</dbReference>
<dbReference type="CDD" id="cd00773">
    <property type="entry name" value="HisRS-like_core"/>
    <property type="match status" value="1"/>
</dbReference>
<dbReference type="Gene3D" id="3.40.50.800">
    <property type="entry name" value="Anticodon-binding domain"/>
    <property type="match status" value="1"/>
</dbReference>
<dbReference type="Gene3D" id="3.30.930.10">
    <property type="entry name" value="Bira Bifunctional Protein, Domain 2"/>
    <property type="match status" value="1"/>
</dbReference>
<dbReference type="HAMAP" id="MF_00127">
    <property type="entry name" value="His_tRNA_synth"/>
    <property type="match status" value="1"/>
</dbReference>
<dbReference type="HAMAP" id="MF_00125">
    <property type="entry name" value="HisZ"/>
    <property type="match status" value="1"/>
</dbReference>
<dbReference type="InterPro" id="IPR006195">
    <property type="entry name" value="aa-tRNA-synth_II"/>
</dbReference>
<dbReference type="InterPro" id="IPR045864">
    <property type="entry name" value="aa-tRNA-synth_II/BPL/LPL"/>
</dbReference>
<dbReference type="InterPro" id="IPR004154">
    <property type="entry name" value="Anticodon-bd"/>
</dbReference>
<dbReference type="InterPro" id="IPR036621">
    <property type="entry name" value="Anticodon-bd_dom_sf"/>
</dbReference>
<dbReference type="InterPro" id="IPR015807">
    <property type="entry name" value="His-tRNA-ligase"/>
</dbReference>
<dbReference type="InterPro" id="IPR041715">
    <property type="entry name" value="HisRS-like_core"/>
</dbReference>
<dbReference type="InterPro" id="IPR004516">
    <property type="entry name" value="HisRS/HisZ"/>
</dbReference>
<dbReference type="InterPro" id="IPR004517">
    <property type="entry name" value="HisZ"/>
</dbReference>
<dbReference type="NCBIfam" id="TIGR00442">
    <property type="entry name" value="hisS"/>
    <property type="match status" value="1"/>
</dbReference>
<dbReference type="NCBIfam" id="TIGR00443">
    <property type="entry name" value="hisZ_biosyn_reg"/>
    <property type="match status" value="1"/>
</dbReference>
<dbReference type="PANTHER" id="PTHR43707:SF1">
    <property type="entry name" value="HISTIDINE--TRNA LIGASE, MITOCHONDRIAL-RELATED"/>
    <property type="match status" value="1"/>
</dbReference>
<dbReference type="PANTHER" id="PTHR43707">
    <property type="entry name" value="HISTIDYL-TRNA SYNTHETASE"/>
    <property type="match status" value="1"/>
</dbReference>
<dbReference type="Pfam" id="PF03129">
    <property type="entry name" value="HGTP_anticodon"/>
    <property type="match status" value="1"/>
</dbReference>
<dbReference type="Pfam" id="PF13393">
    <property type="entry name" value="tRNA-synt_His"/>
    <property type="match status" value="1"/>
</dbReference>
<dbReference type="PIRSF" id="PIRSF001549">
    <property type="entry name" value="His-tRNA_synth"/>
    <property type="match status" value="1"/>
</dbReference>
<dbReference type="SUPFAM" id="SSF52954">
    <property type="entry name" value="Class II aaRS ABD-related"/>
    <property type="match status" value="1"/>
</dbReference>
<dbReference type="SUPFAM" id="SSF55681">
    <property type="entry name" value="Class II aaRS and biotin synthetases"/>
    <property type="match status" value="1"/>
</dbReference>
<dbReference type="PROSITE" id="PS50862">
    <property type="entry name" value="AA_TRNA_LIGASE_II"/>
    <property type="match status" value="1"/>
</dbReference>
<evidence type="ECO:0000255" key="1">
    <source>
        <dbReference type="HAMAP-Rule" id="MF_00127"/>
    </source>
</evidence>
<gene>
    <name evidence="1" type="primary">hisS</name>
    <name type="ordered locus">MmarC6_1055</name>
</gene>
<proteinExistence type="inferred from homology"/>
<accession>A9A947</accession>